<protein>
    <recommendedName>
        <fullName>SWI5-dependent HO expression protein 2</fullName>
    </recommendedName>
</protein>
<proteinExistence type="inferred from homology"/>
<feature type="chain" id="PRO_0000408924" description="SWI5-dependent HO expression protein 2">
    <location>
        <begin position="1"/>
        <end position="246"/>
    </location>
</feature>
<feature type="short sequence motif" description="Nuclear localization signal" evidence="1">
    <location>
        <begin position="15"/>
        <end position="23"/>
    </location>
</feature>
<sequence>MSKDKDIKVTPGTCELIEQILALLSRYLSSYIHVLNKFISHLRRVATLRFERTTLIKFVKKLRFYNDCVLSYNASEFINEGKNELDPEADSFDKVILPIASMFVKCVETFDLLNYYLTQSLQKEILSKTLNEDLTLTAESILAIDDTYNHFVKFSQWMIESLRIGSNLLDLEVVQFAIKCADEDGTNIGETDNIFLQEILPVNSEEEFQTLSAAWHSILDGKLSALDEEFDVVATKWHDKFGKLKN</sequence>
<accession>A6ZZJ0</accession>
<comment type="function">
    <text evidence="1">RNA-binding protein that binds specific mRNAs including the ASH1 mRNA, coding for a repressor of the HO endonuclease. Part of the mRNA localization machinery that restricts accumulation of certain proteins to the bud and in the daughter cell. Recruits the MYO4-SHE3 complex to the ASH1 mRNA. Also recruits LOC1 and PUF6 to ASH1 mRNA, which are required for translational repression of this mRNA (By similarity).</text>
</comment>
<comment type="subunit">
    <text evidence="1">Homodimer and homotetramer. Interacts with LOC1, MYO4, PUF6, SHE3 and with RNA pol II subunits RPO21, SPT4 and SPT5.</text>
</comment>
<comment type="subcellular location">
    <subcellularLocation>
        <location evidence="2">Cytoplasm</location>
    </subcellularLocation>
    <subcellularLocation>
        <location evidence="2">Nucleus</location>
    </subcellularLocation>
    <text evidence="2">Shuttles between the nucleus and cytoplasm and is exported in an mRNA-dependent manner. The presence in the nucleus is essential for PUF6 and LOC1 to bind the ASH1 mRNA.</text>
</comment>
<comment type="similarity">
    <text evidence="3">Belongs to the SHE2 family.</text>
</comment>
<gene>
    <name type="primary">SHE2</name>
    <name type="ORF">SCY_3250</name>
</gene>
<evidence type="ECO:0000250" key="1"/>
<evidence type="ECO:0000250" key="2">
    <source>
        <dbReference type="UniProtKB" id="P36068"/>
    </source>
</evidence>
<evidence type="ECO:0000305" key="3"/>
<reference key="1">
    <citation type="journal article" date="2007" name="Proc. Natl. Acad. Sci. U.S.A.">
        <title>Genome sequencing and comparative analysis of Saccharomyces cerevisiae strain YJM789.</title>
        <authorList>
            <person name="Wei W."/>
            <person name="McCusker J.H."/>
            <person name="Hyman R.W."/>
            <person name="Jones T."/>
            <person name="Ning Y."/>
            <person name="Cao Z."/>
            <person name="Gu Z."/>
            <person name="Bruno D."/>
            <person name="Miranda M."/>
            <person name="Nguyen M."/>
            <person name="Wilhelmy J."/>
            <person name="Komp C."/>
            <person name="Tamse R."/>
            <person name="Wang X."/>
            <person name="Jia P."/>
            <person name="Luedi P."/>
            <person name="Oefner P.J."/>
            <person name="David L."/>
            <person name="Dietrich F.S."/>
            <person name="Li Y."/>
            <person name="Davis R.W."/>
            <person name="Steinmetz L.M."/>
        </authorList>
    </citation>
    <scope>NUCLEOTIDE SEQUENCE [LARGE SCALE GENOMIC DNA]</scope>
    <source>
        <strain>YJM789</strain>
    </source>
</reference>
<name>SHE2_YEAS7</name>
<keyword id="KW-0963">Cytoplasm</keyword>
<keyword id="KW-0509">mRNA transport</keyword>
<keyword id="KW-0539">Nucleus</keyword>
<keyword id="KW-0694">RNA-binding</keyword>
<keyword id="KW-0813">Transport</keyword>
<dbReference type="EMBL" id="AAFW02000151">
    <property type="protein sequence ID" value="EDN60038.1"/>
    <property type="molecule type" value="Genomic_DNA"/>
</dbReference>
<dbReference type="SMR" id="A6ZZJ0"/>
<dbReference type="HOGENOM" id="CLU_1129832_0_0_1"/>
<dbReference type="OrthoDB" id="13575at4893"/>
<dbReference type="Proteomes" id="UP000007060">
    <property type="component" value="Unassembled WGS sequence"/>
</dbReference>
<dbReference type="GO" id="GO:0005737">
    <property type="term" value="C:cytoplasm"/>
    <property type="evidence" value="ECO:0007669"/>
    <property type="project" value="UniProtKB-SubCell"/>
</dbReference>
<dbReference type="GO" id="GO:0005634">
    <property type="term" value="C:nucleus"/>
    <property type="evidence" value="ECO:0007669"/>
    <property type="project" value="UniProtKB-SubCell"/>
</dbReference>
<dbReference type="GO" id="GO:0003723">
    <property type="term" value="F:RNA binding"/>
    <property type="evidence" value="ECO:0007669"/>
    <property type="project" value="UniProtKB-KW"/>
</dbReference>
<dbReference type="GO" id="GO:0051028">
    <property type="term" value="P:mRNA transport"/>
    <property type="evidence" value="ECO:0007669"/>
    <property type="project" value="UniProtKB-KW"/>
</dbReference>
<dbReference type="FunFam" id="1.20.200.20:FF:000001">
    <property type="entry name" value="SWI5-dependent HO expression protein 2"/>
    <property type="match status" value="1"/>
</dbReference>
<dbReference type="Gene3D" id="1.20.200.20">
    <property type="entry name" value="She2 domain"/>
    <property type="match status" value="1"/>
</dbReference>
<dbReference type="InterPro" id="IPR024261">
    <property type="entry name" value="RNA-bd_She2"/>
</dbReference>
<dbReference type="InterPro" id="IPR036827">
    <property type="entry name" value="She2_dom_sf"/>
</dbReference>
<dbReference type="Pfam" id="PF11435">
    <property type="entry name" value="She2p"/>
    <property type="match status" value="1"/>
</dbReference>
<dbReference type="SUPFAM" id="SSF116942">
    <property type="entry name" value="RNA-binding protein She2p"/>
    <property type="match status" value="1"/>
</dbReference>
<organism>
    <name type="scientific">Saccharomyces cerevisiae (strain YJM789)</name>
    <name type="common">Baker's yeast</name>
    <dbReference type="NCBI Taxonomy" id="307796"/>
    <lineage>
        <taxon>Eukaryota</taxon>
        <taxon>Fungi</taxon>
        <taxon>Dikarya</taxon>
        <taxon>Ascomycota</taxon>
        <taxon>Saccharomycotina</taxon>
        <taxon>Saccharomycetes</taxon>
        <taxon>Saccharomycetales</taxon>
        <taxon>Saccharomycetaceae</taxon>
        <taxon>Saccharomyces</taxon>
    </lineage>
</organism>